<organism>
    <name type="scientific">Deinococcus radiodurans (strain ATCC 13939 / DSM 20539 / JCM 16871 / CCUG 27074 / LMG 4051 / NBRC 15346 / NCIMB 9279 / VKM B-1422 / R1)</name>
    <dbReference type="NCBI Taxonomy" id="243230"/>
    <lineage>
        <taxon>Bacteria</taxon>
        <taxon>Thermotogati</taxon>
        <taxon>Deinococcota</taxon>
        <taxon>Deinococci</taxon>
        <taxon>Deinococcales</taxon>
        <taxon>Deinococcaceae</taxon>
        <taxon>Deinococcus</taxon>
    </lineage>
</organism>
<name>TPIS_DEIRA</name>
<accession>Q9RUP5</accession>
<proteinExistence type="evidence at protein level"/>
<comment type="function">
    <text evidence="1 2">Involved in the gluconeogenesis. Catalyzes stereospecifically the conversion of dihydroxyacetone phosphate (DHAP) to D-glyceraldehyde-3-phosphate (G3P).</text>
</comment>
<comment type="catalytic activity">
    <reaction evidence="1 2">
        <text>D-glyceraldehyde 3-phosphate = dihydroxyacetone phosphate</text>
        <dbReference type="Rhea" id="RHEA:18585"/>
        <dbReference type="ChEBI" id="CHEBI:57642"/>
        <dbReference type="ChEBI" id="CHEBI:59776"/>
        <dbReference type="EC" id="5.3.1.1"/>
    </reaction>
</comment>
<comment type="biophysicochemical properties">
    <kinetics>
        <KM evidence="2">0.69 mM for G3P</KM>
        <text evidence="2">kcat is 5678 sec(-1) for isomerase activity.</text>
    </kinetics>
</comment>
<comment type="pathway">
    <text evidence="1">Carbohydrate biosynthesis; gluconeogenesis.</text>
</comment>
<comment type="pathway">
    <text evidence="1">Carbohydrate degradation; glycolysis; D-glyceraldehyde 3-phosphate from glycerone phosphate: step 1/1.</text>
</comment>
<comment type="subunit">
    <text evidence="1 2">Homodimer.</text>
</comment>
<comment type="subcellular location">
    <subcellularLocation>
        <location evidence="1">Cytoplasm</location>
    </subcellularLocation>
</comment>
<comment type="similarity">
    <text evidence="1">Belongs to the triosephosphate isomerase family.</text>
</comment>
<dbReference type="EC" id="5.3.1.1" evidence="1 2"/>
<dbReference type="EMBL" id="AE000513">
    <property type="protein sequence ID" value="AAF10911.1"/>
    <property type="molecule type" value="Genomic_DNA"/>
</dbReference>
<dbReference type="PIR" id="A75408">
    <property type="entry name" value="A75408"/>
</dbReference>
<dbReference type="RefSeq" id="NP_295062.1">
    <property type="nucleotide sequence ID" value="NC_001263.1"/>
</dbReference>
<dbReference type="RefSeq" id="WP_010887980.1">
    <property type="nucleotide sequence ID" value="NC_001263.1"/>
</dbReference>
<dbReference type="PDB" id="4Y90">
    <property type="method" value="X-ray"/>
    <property type="resolution" value="2.10 A"/>
    <property type="chains" value="A/B/C/D=1-244"/>
</dbReference>
<dbReference type="PDBsum" id="4Y90"/>
<dbReference type="SMR" id="Q9RUP5"/>
<dbReference type="FunCoup" id="Q9RUP5">
    <property type="interactions" value="431"/>
</dbReference>
<dbReference type="STRING" id="243230.DR_1339"/>
<dbReference type="PaxDb" id="243230-DR_1339"/>
<dbReference type="EnsemblBacteria" id="AAF10911">
    <property type="protein sequence ID" value="AAF10911"/>
    <property type="gene ID" value="DR_1339"/>
</dbReference>
<dbReference type="KEGG" id="dra:DR_1339"/>
<dbReference type="PATRIC" id="fig|243230.17.peg.1536"/>
<dbReference type="eggNOG" id="COG0149">
    <property type="taxonomic scope" value="Bacteria"/>
</dbReference>
<dbReference type="InParanoid" id="Q9RUP5"/>
<dbReference type="OrthoDB" id="9809429at2"/>
<dbReference type="SABIO-RK" id="Q9RUP5"/>
<dbReference type="UniPathway" id="UPA00109">
    <property type="reaction ID" value="UER00189"/>
</dbReference>
<dbReference type="UniPathway" id="UPA00138"/>
<dbReference type="EvolutionaryTrace" id="Q9RUP5"/>
<dbReference type="Proteomes" id="UP000002524">
    <property type="component" value="Chromosome 1"/>
</dbReference>
<dbReference type="GO" id="GO:0005829">
    <property type="term" value="C:cytosol"/>
    <property type="evidence" value="ECO:0000318"/>
    <property type="project" value="GO_Central"/>
</dbReference>
<dbReference type="GO" id="GO:0004807">
    <property type="term" value="F:triose-phosphate isomerase activity"/>
    <property type="evidence" value="ECO:0000318"/>
    <property type="project" value="GO_Central"/>
</dbReference>
<dbReference type="GO" id="GO:0006094">
    <property type="term" value="P:gluconeogenesis"/>
    <property type="evidence" value="ECO:0000318"/>
    <property type="project" value="GO_Central"/>
</dbReference>
<dbReference type="GO" id="GO:0046166">
    <property type="term" value="P:glyceraldehyde-3-phosphate biosynthetic process"/>
    <property type="evidence" value="ECO:0000318"/>
    <property type="project" value="GO_Central"/>
</dbReference>
<dbReference type="GO" id="GO:0019563">
    <property type="term" value="P:glycerol catabolic process"/>
    <property type="evidence" value="ECO:0000318"/>
    <property type="project" value="GO_Central"/>
</dbReference>
<dbReference type="GO" id="GO:0006096">
    <property type="term" value="P:glycolytic process"/>
    <property type="evidence" value="ECO:0000318"/>
    <property type="project" value="GO_Central"/>
</dbReference>
<dbReference type="CDD" id="cd00311">
    <property type="entry name" value="TIM"/>
    <property type="match status" value="1"/>
</dbReference>
<dbReference type="FunFam" id="3.20.20.70:FF:000016">
    <property type="entry name" value="Triosephosphate isomerase"/>
    <property type="match status" value="1"/>
</dbReference>
<dbReference type="Gene3D" id="3.20.20.70">
    <property type="entry name" value="Aldolase class I"/>
    <property type="match status" value="1"/>
</dbReference>
<dbReference type="HAMAP" id="MF_00147_B">
    <property type="entry name" value="TIM_B"/>
    <property type="match status" value="1"/>
</dbReference>
<dbReference type="InterPro" id="IPR013785">
    <property type="entry name" value="Aldolase_TIM"/>
</dbReference>
<dbReference type="InterPro" id="IPR035990">
    <property type="entry name" value="TIM_sf"/>
</dbReference>
<dbReference type="InterPro" id="IPR022896">
    <property type="entry name" value="TrioseP_Isoase_bac/euk"/>
</dbReference>
<dbReference type="InterPro" id="IPR000652">
    <property type="entry name" value="Triosephosphate_isomerase"/>
</dbReference>
<dbReference type="InterPro" id="IPR020861">
    <property type="entry name" value="Triosephosphate_isomerase_AS"/>
</dbReference>
<dbReference type="NCBIfam" id="TIGR00419">
    <property type="entry name" value="tim"/>
    <property type="match status" value="1"/>
</dbReference>
<dbReference type="PANTHER" id="PTHR21139">
    <property type="entry name" value="TRIOSEPHOSPHATE ISOMERASE"/>
    <property type="match status" value="1"/>
</dbReference>
<dbReference type="PANTHER" id="PTHR21139:SF42">
    <property type="entry name" value="TRIOSEPHOSPHATE ISOMERASE"/>
    <property type="match status" value="1"/>
</dbReference>
<dbReference type="Pfam" id="PF00121">
    <property type="entry name" value="TIM"/>
    <property type="match status" value="1"/>
</dbReference>
<dbReference type="SUPFAM" id="SSF51351">
    <property type="entry name" value="Triosephosphate isomerase (TIM)"/>
    <property type="match status" value="1"/>
</dbReference>
<dbReference type="PROSITE" id="PS00171">
    <property type="entry name" value="TIM_1"/>
    <property type="match status" value="1"/>
</dbReference>
<dbReference type="PROSITE" id="PS51440">
    <property type="entry name" value="TIM_2"/>
    <property type="match status" value="1"/>
</dbReference>
<evidence type="ECO:0000255" key="1">
    <source>
        <dbReference type="HAMAP-Rule" id="MF_00147"/>
    </source>
</evidence>
<evidence type="ECO:0000269" key="2">
    <source>
    </source>
</evidence>
<evidence type="ECO:0000303" key="3">
    <source>
    </source>
</evidence>
<evidence type="ECO:0007829" key="4">
    <source>
        <dbReference type="PDB" id="4Y90"/>
    </source>
</evidence>
<sequence length="244" mass="25322">MQTLLALNWKMNKTPTEARSWAEELTTKYAPAEGVDLAVLAPALDLSALAANLPAGIAFGGQDVSAHESGAYTGEISAAMLKDAGASCVVVGHSERREYHDESDAXVAAKARQAQANGLLPIVCVGENLDVRERGEHVPQTLAQLRGSLEGVGADVVVAYEPVWAIGTGKTATADDAEELAAAIRGALREQYGARAEGIRVLYGGSVKPENIAEICGKPNVNGALVGGASLKVPDVLGMLDALR</sequence>
<keyword id="KW-0002">3D-structure</keyword>
<keyword id="KW-0963">Cytoplasm</keyword>
<keyword id="KW-0312">Gluconeogenesis</keyword>
<keyword id="KW-0324">Glycolysis</keyword>
<keyword id="KW-0413">Isomerase</keyword>
<keyword id="KW-1185">Reference proteome</keyword>
<protein>
    <recommendedName>
        <fullName evidence="1 3">Triosephosphate isomerase</fullName>
        <shortName evidence="1 3">TIM</shortName>
        <shortName evidence="1">TPI</shortName>
        <ecNumber evidence="1 2">5.3.1.1</ecNumber>
    </recommendedName>
    <alternativeName>
        <fullName evidence="1">Triose-phosphate isomerase</fullName>
    </alternativeName>
</protein>
<reference key="1">
    <citation type="journal article" date="1999" name="Science">
        <title>Genome sequence of the radioresistant bacterium Deinococcus radiodurans R1.</title>
        <authorList>
            <person name="White O."/>
            <person name="Eisen J.A."/>
            <person name="Heidelberg J.F."/>
            <person name="Hickey E.K."/>
            <person name="Peterson J.D."/>
            <person name="Dodson R.J."/>
            <person name="Haft D.H."/>
            <person name="Gwinn M.L."/>
            <person name="Nelson W.C."/>
            <person name="Richardson D.L."/>
            <person name="Moffat K.S."/>
            <person name="Qin H."/>
            <person name="Jiang L."/>
            <person name="Pamphile W."/>
            <person name="Crosby M."/>
            <person name="Shen M."/>
            <person name="Vamathevan J.J."/>
            <person name="Lam P."/>
            <person name="McDonald L.A."/>
            <person name="Utterback T.R."/>
            <person name="Zalewski C."/>
            <person name="Makarova K.S."/>
            <person name="Aravind L."/>
            <person name="Daly M.J."/>
            <person name="Minton K.W."/>
            <person name="Fleischmann R.D."/>
            <person name="Ketchum K.A."/>
            <person name="Nelson K.E."/>
            <person name="Salzberg S.L."/>
            <person name="Smith H.O."/>
            <person name="Venter J.C."/>
            <person name="Fraser C.M."/>
        </authorList>
    </citation>
    <scope>NUCLEOTIDE SEQUENCE [LARGE SCALE GENOMIC DNA]</scope>
    <source>
        <strain>ATCC 13939 / DSM 20539 / JCM 16871 / CCUG 27074 / LMG 4051 / NBRC 15346 / NCIMB 9279 / VKM B-1422 / R1</strain>
    </source>
</reference>
<reference key="2">
    <citation type="journal article" date="2015" name="Phys. Chem. Chem. Phys.">
        <title>Reversibility and two state behaviour in the thermal unfolding of oligomeric TIM barrel proteins.</title>
        <authorList>
            <person name="Romero-Romero S."/>
            <person name="Costas M."/>
            <person name="Rodriguez-Romero A."/>
            <person name="Alejandro Fernandez-Velasco D."/>
        </authorList>
    </citation>
    <scope>X-RAY CRYSTALLOGRAPHY (2.10 ANGSTROMS)</scope>
    <scope>FUNCTION</scope>
    <scope>CATALYTIC ACTIVITY</scope>
    <scope>BIOPHYSICOCHEMICAL PROPERTIES</scope>
    <scope>SUBUNIT</scope>
    <source>
        <strain>13 / Type A</strain>
    </source>
</reference>
<gene>
    <name evidence="1" type="primary">tpiA</name>
    <name type="ordered locus">DR_1339</name>
</gene>
<feature type="chain" id="PRO_0000090216" description="Triosephosphate isomerase">
    <location>
        <begin position="1"/>
        <end position="244"/>
    </location>
</feature>
<feature type="active site" description="Electrophile" evidence="1">
    <location>
        <position position="93"/>
    </location>
</feature>
<feature type="active site" description="Proton acceptor" evidence="1">
    <location>
        <position position="161"/>
    </location>
</feature>
<feature type="binding site" evidence="1">
    <location>
        <begin position="8"/>
        <end position="10"/>
    </location>
    <ligand>
        <name>substrate</name>
    </ligand>
</feature>
<feature type="binding site" evidence="1">
    <location>
        <position position="167"/>
    </location>
    <ligand>
        <name>substrate</name>
    </ligand>
</feature>
<feature type="binding site" evidence="1">
    <location>
        <position position="206"/>
    </location>
    <ligand>
        <name>substrate</name>
    </ligand>
</feature>
<feature type="binding site" evidence="1">
    <location>
        <begin position="227"/>
        <end position="228"/>
    </location>
    <ligand>
        <name>substrate</name>
    </ligand>
</feature>
<feature type="strand" evidence="4">
    <location>
        <begin position="3"/>
        <end position="8"/>
    </location>
</feature>
<feature type="helix" evidence="4">
    <location>
        <begin position="15"/>
        <end position="28"/>
    </location>
</feature>
<feature type="strand" evidence="4">
    <location>
        <begin position="35"/>
        <end position="40"/>
    </location>
</feature>
<feature type="helix" evidence="4">
    <location>
        <begin position="43"/>
        <end position="45"/>
    </location>
</feature>
<feature type="helix" evidence="4">
    <location>
        <begin position="46"/>
        <end position="52"/>
    </location>
</feature>
<feature type="strand" evidence="4">
    <location>
        <begin position="57"/>
        <end position="62"/>
    </location>
</feature>
<feature type="strand" evidence="4">
    <location>
        <begin position="66"/>
        <end position="71"/>
    </location>
</feature>
<feature type="helix" evidence="4">
    <location>
        <begin position="78"/>
        <end position="83"/>
    </location>
</feature>
<feature type="strand" evidence="4">
    <location>
        <begin position="88"/>
        <end position="92"/>
    </location>
</feature>
<feature type="helix" evidence="4">
    <location>
        <begin position="94"/>
        <end position="99"/>
    </location>
</feature>
<feature type="helix" evidence="4">
    <location>
        <begin position="104"/>
        <end position="116"/>
    </location>
</feature>
<feature type="strand" evidence="4">
    <location>
        <begin position="120"/>
        <end position="125"/>
    </location>
</feature>
<feature type="helix" evidence="4">
    <location>
        <begin position="129"/>
        <end position="133"/>
    </location>
</feature>
<feature type="helix" evidence="4">
    <location>
        <begin position="137"/>
        <end position="148"/>
    </location>
</feature>
<feature type="turn" evidence="4">
    <location>
        <begin position="149"/>
        <end position="151"/>
    </location>
</feature>
<feature type="strand" evidence="4">
    <location>
        <begin position="157"/>
        <end position="160"/>
    </location>
</feature>
<feature type="helix" evidence="4">
    <location>
        <begin position="163"/>
        <end position="165"/>
    </location>
</feature>
<feature type="strand" evidence="4">
    <location>
        <begin position="166"/>
        <end position="169"/>
    </location>
</feature>
<feature type="helix" evidence="4">
    <location>
        <begin position="174"/>
        <end position="192"/>
    </location>
</feature>
<feature type="helix" evidence="4">
    <location>
        <begin position="193"/>
        <end position="198"/>
    </location>
</feature>
<feature type="strand" evidence="4">
    <location>
        <begin position="199"/>
        <end position="206"/>
    </location>
</feature>
<feature type="helix" evidence="4">
    <location>
        <begin position="209"/>
        <end position="216"/>
    </location>
</feature>
<feature type="strand" evidence="4">
    <location>
        <begin position="223"/>
        <end position="227"/>
    </location>
</feature>
<feature type="helix" evidence="4">
    <location>
        <begin position="228"/>
        <end position="230"/>
    </location>
</feature>
<feature type="helix" evidence="4">
    <location>
        <begin position="233"/>
        <end position="242"/>
    </location>
</feature>